<accession>B4UKM8</accession>
<evidence type="ECO:0000255" key="1">
    <source>
        <dbReference type="HAMAP-Rule" id="MF_00336"/>
    </source>
</evidence>
<dbReference type="EC" id="6.3.3.3" evidence="1"/>
<dbReference type="EMBL" id="CP001131">
    <property type="protein sequence ID" value="ACG71319.1"/>
    <property type="molecule type" value="Genomic_DNA"/>
</dbReference>
<dbReference type="RefSeq" id="WP_012524156.1">
    <property type="nucleotide sequence ID" value="NC_011145.1"/>
</dbReference>
<dbReference type="SMR" id="B4UKM8"/>
<dbReference type="KEGG" id="ank:AnaeK_0076"/>
<dbReference type="HOGENOM" id="CLU_072551_3_1_7"/>
<dbReference type="OrthoDB" id="9802097at2"/>
<dbReference type="UniPathway" id="UPA00078">
    <property type="reaction ID" value="UER00161"/>
</dbReference>
<dbReference type="Proteomes" id="UP000001871">
    <property type="component" value="Chromosome"/>
</dbReference>
<dbReference type="GO" id="GO:0005829">
    <property type="term" value="C:cytosol"/>
    <property type="evidence" value="ECO:0007669"/>
    <property type="project" value="TreeGrafter"/>
</dbReference>
<dbReference type="GO" id="GO:0005524">
    <property type="term" value="F:ATP binding"/>
    <property type="evidence" value="ECO:0007669"/>
    <property type="project" value="UniProtKB-UniRule"/>
</dbReference>
<dbReference type="GO" id="GO:0004141">
    <property type="term" value="F:dethiobiotin synthase activity"/>
    <property type="evidence" value="ECO:0007669"/>
    <property type="project" value="UniProtKB-UniRule"/>
</dbReference>
<dbReference type="GO" id="GO:0000287">
    <property type="term" value="F:magnesium ion binding"/>
    <property type="evidence" value="ECO:0007669"/>
    <property type="project" value="UniProtKB-UniRule"/>
</dbReference>
<dbReference type="GO" id="GO:0009102">
    <property type="term" value="P:biotin biosynthetic process"/>
    <property type="evidence" value="ECO:0007669"/>
    <property type="project" value="UniProtKB-UniRule"/>
</dbReference>
<dbReference type="CDD" id="cd03109">
    <property type="entry name" value="DTBS"/>
    <property type="match status" value="1"/>
</dbReference>
<dbReference type="Gene3D" id="3.40.50.300">
    <property type="entry name" value="P-loop containing nucleotide triphosphate hydrolases"/>
    <property type="match status" value="1"/>
</dbReference>
<dbReference type="HAMAP" id="MF_00336">
    <property type="entry name" value="BioD"/>
    <property type="match status" value="1"/>
</dbReference>
<dbReference type="InterPro" id="IPR004472">
    <property type="entry name" value="DTB_synth_BioD"/>
</dbReference>
<dbReference type="InterPro" id="IPR027417">
    <property type="entry name" value="P-loop_NTPase"/>
</dbReference>
<dbReference type="NCBIfam" id="TIGR00347">
    <property type="entry name" value="bioD"/>
    <property type="match status" value="1"/>
</dbReference>
<dbReference type="PANTHER" id="PTHR43210">
    <property type="entry name" value="DETHIOBIOTIN SYNTHETASE"/>
    <property type="match status" value="1"/>
</dbReference>
<dbReference type="PANTHER" id="PTHR43210:SF5">
    <property type="entry name" value="DETHIOBIOTIN SYNTHETASE"/>
    <property type="match status" value="1"/>
</dbReference>
<dbReference type="Pfam" id="PF13500">
    <property type="entry name" value="AAA_26"/>
    <property type="match status" value="1"/>
</dbReference>
<dbReference type="PIRSF" id="PIRSF006755">
    <property type="entry name" value="DTB_synth"/>
    <property type="match status" value="1"/>
</dbReference>
<dbReference type="SUPFAM" id="SSF52540">
    <property type="entry name" value="P-loop containing nucleoside triphosphate hydrolases"/>
    <property type="match status" value="1"/>
</dbReference>
<organism>
    <name type="scientific">Anaeromyxobacter sp. (strain K)</name>
    <dbReference type="NCBI Taxonomy" id="447217"/>
    <lineage>
        <taxon>Bacteria</taxon>
        <taxon>Pseudomonadati</taxon>
        <taxon>Myxococcota</taxon>
        <taxon>Myxococcia</taxon>
        <taxon>Myxococcales</taxon>
        <taxon>Cystobacterineae</taxon>
        <taxon>Anaeromyxobacteraceae</taxon>
        <taxon>Anaeromyxobacter</taxon>
    </lineage>
</organism>
<protein>
    <recommendedName>
        <fullName evidence="1">ATP-dependent dethiobiotin synthetase BioD</fullName>
        <ecNumber evidence="1">6.3.3.3</ecNumber>
    </recommendedName>
    <alternativeName>
        <fullName evidence="1">DTB synthetase</fullName>
        <shortName evidence="1">DTBS</shortName>
    </alternativeName>
    <alternativeName>
        <fullName evidence="1">Dethiobiotin synthase</fullName>
    </alternativeName>
</protein>
<sequence length="223" mass="23021">MRGLFVTGTDTGVGKTEVSCALLRAARAAGLDAVGMKPAQSGHVPGEPSDAERLREASDCVEPLEAICPYTFAAPLAPAAAARLEGREVSLARVVEVARALAARHAAVVVEGAGGLLVPLTARETHADLAAALGLPVLVVARAGLGTVNHTALTVEALERRGLAVAGIVLNRTGPEDDPSVPLNPAEIARLTHREPIALLPWEPDIARRARSLGSILGAKIQF</sequence>
<name>BIOD_ANASK</name>
<keyword id="KW-0067">ATP-binding</keyword>
<keyword id="KW-0093">Biotin biosynthesis</keyword>
<keyword id="KW-0963">Cytoplasm</keyword>
<keyword id="KW-0436">Ligase</keyword>
<keyword id="KW-0460">Magnesium</keyword>
<keyword id="KW-0479">Metal-binding</keyword>
<keyword id="KW-0547">Nucleotide-binding</keyword>
<gene>
    <name evidence="1" type="primary">bioD</name>
    <name type="ordered locus">AnaeK_0076</name>
</gene>
<reference key="1">
    <citation type="submission" date="2008-08" db="EMBL/GenBank/DDBJ databases">
        <title>Complete sequence of Anaeromyxobacter sp. K.</title>
        <authorList>
            <consortium name="US DOE Joint Genome Institute"/>
            <person name="Lucas S."/>
            <person name="Copeland A."/>
            <person name="Lapidus A."/>
            <person name="Glavina del Rio T."/>
            <person name="Dalin E."/>
            <person name="Tice H."/>
            <person name="Bruce D."/>
            <person name="Goodwin L."/>
            <person name="Pitluck S."/>
            <person name="Saunders E."/>
            <person name="Brettin T."/>
            <person name="Detter J.C."/>
            <person name="Han C."/>
            <person name="Larimer F."/>
            <person name="Land M."/>
            <person name="Hauser L."/>
            <person name="Kyrpides N."/>
            <person name="Ovchinnikiva G."/>
            <person name="Beliaev A."/>
        </authorList>
    </citation>
    <scope>NUCLEOTIDE SEQUENCE [LARGE SCALE GENOMIC DNA]</scope>
    <source>
        <strain>K</strain>
    </source>
</reference>
<comment type="function">
    <text evidence="1">Catalyzes a mechanistically unusual reaction, the ATP-dependent insertion of CO2 between the N7 and N8 nitrogen atoms of 7,8-diaminopelargonic acid (DAPA, also called 7,8-diammoniononanoate) to form a ureido ring.</text>
</comment>
<comment type="catalytic activity">
    <reaction evidence="1">
        <text>(7R,8S)-7,8-diammoniononanoate + CO2 + ATP = (4R,5S)-dethiobiotin + ADP + phosphate + 3 H(+)</text>
        <dbReference type="Rhea" id="RHEA:15805"/>
        <dbReference type="ChEBI" id="CHEBI:15378"/>
        <dbReference type="ChEBI" id="CHEBI:16526"/>
        <dbReference type="ChEBI" id="CHEBI:30616"/>
        <dbReference type="ChEBI" id="CHEBI:43474"/>
        <dbReference type="ChEBI" id="CHEBI:149469"/>
        <dbReference type="ChEBI" id="CHEBI:149473"/>
        <dbReference type="ChEBI" id="CHEBI:456216"/>
        <dbReference type="EC" id="6.3.3.3"/>
    </reaction>
</comment>
<comment type="cofactor">
    <cofactor evidence="1">
        <name>Mg(2+)</name>
        <dbReference type="ChEBI" id="CHEBI:18420"/>
    </cofactor>
</comment>
<comment type="pathway">
    <text evidence="1">Cofactor biosynthesis; biotin biosynthesis; biotin from 7,8-diaminononanoate: step 1/2.</text>
</comment>
<comment type="subunit">
    <text evidence="1">Homodimer.</text>
</comment>
<comment type="subcellular location">
    <subcellularLocation>
        <location evidence="1">Cytoplasm</location>
    </subcellularLocation>
</comment>
<comment type="similarity">
    <text evidence="1">Belongs to the dethiobiotin synthetase family.</text>
</comment>
<feature type="chain" id="PRO_1000119854" description="ATP-dependent dethiobiotin synthetase BioD">
    <location>
        <begin position="1"/>
        <end position="223"/>
    </location>
</feature>
<feature type="active site" evidence="1">
    <location>
        <position position="37"/>
    </location>
</feature>
<feature type="binding site" evidence="1">
    <location>
        <position position="16"/>
    </location>
    <ligand>
        <name>Mg(2+)</name>
        <dbReference type="ChEBI" id="CHEBI:18420"/>
    </ligand>
</feature>
<feature type="binding site" evidence="1">
    <location>
        <position position="41"/>
    </location>
    <ligand>
        <name>substrate</name>
    </ligand>
</feature>
<feature type="binding site" evidence="1">
    <location>
        <position position="50"/>
    </location>
    <ligand>
        <name>ATP</name>
        <dbReference type="ChEBI" id="CHEBI:30616"/>
    </ligand>
</feature>
<feature type="binding site" evidence="1">
    <location>
        <position position="50"/>
    </location>
    <ligand>
        <name>Mg(2+)</name>
        <dbReference type="ChEBI" id="CHEBI:18420"/>
    </ligand>
</feature>
<feature type="binding site" evidence="1">
    <location>
        <begin position="111"/>
        <end position="114"/>
    </location>
    <ligand>
        <name>ATP</name>
        <dbReference type="ChEBI" id="CHEBI:30616"/>
    </ligand>
</feature>
<feature type="binding site" evidence="1">
    <location>
        <position position="111"/>
    </location>
    <ligand>
        <name>Mg(2+)</name>
        <dbReference type="ChEBI" id="CHEBI:18420"/>
    </ligand>
</feature>
<feature type="binding site" evidence="1">
    <location>
        <begin position="171"/>
        <end position="172"/>
    </location>
    <ligand>
        <name>ATP</name>
        <dbReference type="ChEBI" id="CHEBI:30616"/>
    </ligand>
</feature>
<proteinExistence type="inferred from homology"/>